<feature type="chain" id="PRO_0000105174" description="Glutamyl-tRNA(Gln) amidotransferase subunit A">
    <location>
        <begin position="1"/>
        <end position="483"/>
    </location>
</feature>
<feature type="active site" description="Charge relay system" evidence="1">
    <location>
        <position position="77"/>
    </location>
</feature>
<feature type="active site" description="Charge relay system" evidence="1">
    <location>
        <position position="152"/>
    </location>
</feature>
<feature type="active site" description="Acyl-ester intermediate" evidence="1">
    <location>
        <position position="176"/>
    </location>
</feature>
<keyword id="KW-0067">ATP-binding</keyword>
<keyword id="KW-0436">Ligase</keyword>
<keyword id="KW-0547">Nucleotide-binding</keyword>
<keyword id="KW-0648">Protein biosynthesis</keyword>
<name>GATA_LISMF</name>
<organism>
    <name type="scientific">Listeria monocytogenes serotype 4b (strain F2365)</name>
    <dbReference type="NCBI Taxonomy" id="265669"/>
    <lineage>
        <taxon>Bacteria</taxon>
        <taxon>Bacillati</taxon>
        <taxon>Bacillota</taxon>
        <taxon>Bacilli</taxon>
        <taxon>Bacillales</taxon>
        <taxon>Listeriaceae</taxon>
        <taxon>Listeria</taxon>
    </lineage>
</organism>
<accession>Q71YR3</accession>
<gene>
    <name evidence="1" type="primary">gatA</name>
    <name type="ordered locus">LMOf2365_1780</name>
</gene>
<proteinExistence type="inferred from homology"/>
<protein>
    <recommendedName>
        <fullName evidence="1">Glutamyl-tRNA(Gln) amidotransferase subunit A</fullName>
        <shortName evidence="1">Glu-ADT subunit A</shortName>
        <ecNumber evidence="1">6.3.5.7</ecNumber>
    </recommendedName>
</protein>
<reference key="1">
    <citation type="journal article" date="2004" name="Nucleic Acids Res.">
        <title>Whole genome comparisons of serotype 4b and 1/2a strains of the food-borne pathogen Listeria monocytogenes reveal new insights into the core genome components of this species.</title>
        <authorList>
            <person name="Nelson K.E."/>
            <person name="Fouts D.E."/>
            <person name="Mongodin E.F."/>
            <person name="Ravel J."/>
            <person name="DeBoy R.T."/>
            <person name="Kolonay J.F."/>
            <person name="Rasko D.A."/>
            <person name="Angiuoli S.V."/>
            <person name="Gill S.R."/>
            <person name="Paulsen I.T."/>
            <person name="Peterson J.D."/>
            <person name="White O."/>
            <person name="Nelson W.C."/>
            <person name="Nierman W.C."/>
            <person name="Beanan M.J."/>
            <person name="Brinkac L.M."/>
            <person name="Daugherty S.C."/>
            <person name="Dodson R.J."/>
            <person name="Durkin A.S."/>
            <person name="Madupu R."/>
            <person name="Haft D.H."/>
            <person name="Selengut J."/>
            <person name="Van Aken S.E."/>
            <person name="Khouri H.M."/>
            <person name="Fedorova N."/>
            <person name="Forberger H.A."/>
            <person name="Tran B."/>
            <person name="Kathariou S."/>
            <person name="Wonderling L.D."/>
            <person name="Uhlich G.A."/>
            <person name="Bayles D.O."/>
            <person name="Luchansky J.B."/>
            <person name="Fraser C.M."/>
        </authorList>
    </citation>
    <scope>NUCLEOTIDE SEQUENCE [LARGE SCALE GENOMIC DNA]</scope>
    <source>
        <strain>F2365</strain>
    </source>
</reference>
<sequence>MGLFDFSVKELHDKLVKKEISPFDLVSESFNRIESVEDKVGSFITLNKEAAFGVAEELGDAGIDPNNMLSGLPIGIKDNIVTKNLRTTAASKILENFDPIYDATVVSKLKNAQTINIGKLNMDEFAMGSSTETSYFHKTHNPWDLSRVPGGSSGGSASAVAAGEVLFSLGSDTGGSIRQPAAFCGVVGMKPTYGRVSRFGLIAFASSLDQIGPITKNVEDNAYLLEAISGLDANDSTSINQPVERFSDSLTGDIKGLRIGVPKEYLGEGVDPGVKQAVLDALKTLEKLGATWDEVSLPHSEYGVASYYILASSEASSNLSRFDGVRYGYRSPNATTLEELYTKTRSEGFGDEVKRRIMLGTYALSSGYYDAYYKKAQQARTLIKQDFVNVFENYDVIIGPSSPTTAFKIDGMINDPITMYSNDILTVPINLAGVPAISVPCGFSDGLPVGLQIIGNYFEESLLYKVAHAFEQETTFHKEKPNL</sequence>
<dbReference type="EC" id="6.3.5.7" evidence="1"/>
<dbReference type="EMBL" id="AE017262">
    <property type="protein sequence ID" value="AAT04551.1"/>
    <property type="molecule type" value="Genomic_DNA"/>
</dbReference>
<dbReference type="RefSeq" id="WP_003728230.1">
    <property type="nucleotide sequence ID" value="NC_002973.6"/>
</dbReference>
<dbReference type="SMR" id="Q71YR3"/>
<dbReference type="KEGG" id="lmf:LMOf2365_1780"/>
<dbReference type="HOGENOM" id="CLU_009600_0_3_9"/>
<dbReference type="GO" id="GO:0030956">
    <property type="term" value="C:glutamyl-tRNA(Gln) amidotransferase complex"/>
    <property type="evidence" value="ECO:0007669"/>
    <property type="project" value="InterPro"/>
</dbReference>
<dbReference type="GO" id="GO:0005524">
    <property type="term" value="F:ATP binding"/>
    <property type="evidence" value="ECO:0007669"/>
    <property type="project" value="UniProtKB-KW"/>
</dbReference>
<dbReference type="GO" id="GO:0050567">
    <property type="term" value="F:glutaminyl-tRNA synthase (glutamine-hydrolyzing) activity"/>
    <property type="evidence" value="ECO:0007669"/>
    <property type="project" value="UniProtKB-UniRule"/>
</dbReference>
<dbReference type="GO" id="GO:0006412">
    <property type="term" value="P:translation"/>
    <property type="evidence" value="ECO:0007669"/>
    <property type="project" value="UniProtKB-UniRule"/>
</dbReference>
<dbReference type="Gene3D" id="3.90.1300.10">
    <property type="entry name" value="Amidase signature (AS) domain"/>
    <property type="match status" value="1"/>
</dbReference>
<dbReference type="HAMAP" id="MF_00120">
    <property type="entry name" value="GatA"/>
    <property type="match status" value="1"/>
</dbReference>
<dbReference type="InterPro" id="IPR000120">
    <property type="entry name" value="Amidase"/>
</dbReference>
<dbReference type="InterPro" id="IPR020556">
    <property type="entry name" value="Amidase_CS"/>
</dbReference>
<dbReference type="InterPro" id="IPR023631">
    <property type="entry name" value="Amidase_dom"/>
</dbReference>
<dbReference type="InterPro" id="IPR036928">
    <property type="entry name" value="AS_sf"/>
</dbReference>
<dbReference type="InterPro" id="IPR004412">
    <property type="entry name" value="GatA"/>
</dbReference>
<dbReference type="NCBIfam" id="TIGR00132">
    <property type="entry name" value="gatA"/>
    <property type="match status" value="1"/>
</dbReference>
<dbReference type="PANTHER" id="PTHR11895:SF151">
    <property type="entry name" value="GLUTAMYL-TRNA(GLN) AMIDOTRANSFERASE SUBUNIT A"/>
    <property type="match status" value="1"/>
</dbReference>
<dbReference type="PANTHER" id="PTHR11895">
    <property type="entry name" value="TRANSAMIDASE"/>
    <property type="match status" value="1"/>
</dbReference>
<dbReference type="Pfam" id="PF01425">
    <property type="entry name" value="Amidase"/>
    <property type="match status" value="1"/>
</dbReference>
<dbReference type="SUPFAM" id="SSF75304">
    <property type="entry name" value="Amidase signature (AS) enzymes"/>
    <property type="match status" value="1"/>
</dbReference>
<dbReference type="PROSITE" id="PS00571">
    <property type="entry name" value="AMIDASES"/>
    <property type="match status" value="1"/>
</dbReference>
<evidence type="ECO:0000255" key="1">
    <source>
        <dbReference type="HAMAP-Rule" id="MF_00120"/>
    </source>
</evidence>
<comment type="function">
    <text evidence="1">Allows the formation of correctly charged Gln-tRNA(Gln) through the transamidation of misacylated Glu-tRNA(Gln) in organisms which lack glutaminyl-tRNA synthetase. The reaction takes place in the presence of glutamine and ATP through an activated gamma-phospho-Glu-tRNA(Gln).</text>
</comment>
<comment type="catalytic activity">
    <reaction evidence="1">
        <text>L-glutamyl-tRNA(Gln) + L-glutamine + ATP + H2O = L-glutaminyl-tRNA(Gln) + L-glutamate + ADP + phosphate + H(+)</text>
        <dbReference type="Rhea" id="RHEA:17521"/>
        <dbReference type="Rhea" id="RHEA-COMP:9681"/>
        <dbReference type="Rhea" id="RHEA-COMP:9684"/>
        <dbReference type="ChEBI" id="CHEBI:15377"/>
        <dbReference type="ChEBI" id="CHEBI:15378"/>
        <dbReference type="ChEBI" id="CHEBI:29985"/>
        <dbReference type="ChEBI" id="CHEBI:30616"/>
        <dbReference type="ChEBI" id="CHEBI:43474"/>
        <dbReference type="ChEBI" id="CHEBI:58359"/>
        <dbReference type="ChEBI" id="CHEBI:78520"/>
        <dbReference type="ChEBI" id="CHEBI:78521"/>
        <dbReference type="ChEBI" id="CHEBI:456216"/>
        <dbReference type="EC" id="6.3.5.7"/>
    </reaction>
</comment>
<comment type="subunit">
    <text evidence="1">Heterotrimer of A, B and C subunits.</text>
</comment>
<comment type="similarity">
    <text evidence="1">Belongs to the amidase family. GatA subfamily.</text>
</comment>